<gene>
    <name type="primary">NPF4.6</name>
    <name type="synonym">AIT1</name>
    <name type="synonym">NRT1.2</name>
    <name type="synonym">NTL1</name>
    <name type="synonym">NTR1:2</name>
    <name type="ordered locus">At1g69850</name>
    <name type="ORF">T17F3.12</name>
</gene>
<comment type="function">
    <text evidence="2 6 7">Low-affinity proton-dependent nitrate transporter. Involved in constitutive nitrate uptake. Not involved in histidine or dipeptides transport. Involved in (+)-abscisic acid (ABA) transport, but not in gibberellin, indole-3-acetic acid or jasmonic acid import. Mediates cellular ABA uptake. Nitrate does not compete with abscisic acid as a substrate of NPF4.6 (PubMed:24084651).</text>
</comment>
<comment type="biophysicochemical properties">
    <kinetics>
        <KM evidence="2 6">5.9 mM for nitrate</KM>
        <KM evidence="2 6">5 uM for (+)-abscisic acid (in insect cells)</KM>
    </kinetics>
</comment>
<comment type="interaction">
    <interactant intactId="EBI-4433263">
        <id>Q8H157</id>
    </interactant>
    <interactant intactId="EBI-2363233">
        <id>Q9FJ50</id>
        <label>PYL11</label>
    </interactant>
    <organismsDiffer>false</organismsDiffer>
    <experiments>3</experiments>
</comment>
<comment type="subcellular location">
    <subcellularLocation>
        <location evidence="6">Cell membrane</location>
        <topology evidence="6">Multi-pass membrane protein</topology>
    </subcellularLocation>
</comment>
<comment type="tissue specificity">
    <text evidence="2 5 6">Expressed in root hairs and in epidermis of both root tips and mature regions of roots. Detected in shoots, stems, flowers, siliques and imbibed seeds. Expressed in vascular tissues in cotyledons, trus leaves, hypocotyls, roots and inflorescence stems.</text>
</comment>
<comment type="induction">
    <text evidence="2 3 4">Not regulated by nitrate. Down-regulated upon nematode infection.</text>
</comment>
<comment type="disruption phenotype">
    <text evidence="6">Reduced effect of ABA on seed germination and postgermination growth and increased number of open stomata.</text>
</comment>
<comment type="similarity">
    <text evidence="8">Belongs to the major facilitator superfamily. Proton-dependent oligopeptide transporter (POT/PTR) (TC 2.A.17) family.</text>
</comment>
<comment type="sequence caution" evidence="8">
    <conflict type="erroneous gene model prediction">
        <sequence resource="EMBL-CDS" id="AAG52554"/>
    </conflict>
</comment>
<evidence type="ECO:0000255" key="1"/>
<evidence type="ECO:0000269" key="2">
    <source>
    </source>
</evidence>
<evidence type="ECO:0000269" key="3">
    <source>
    </source>
</evidence>
<evidence type="ECO:0000269" key="4">
    <source>
    </source>
</evidence>
<evidence type="ECO:0000269" key="5">
    <source>
    </source>
</evidence>
<evidence type="ECO:0000269" key="6">
    <source>
    </source>
</evidence>
<evidence type="ECO:0000269" key="7">
    <source>
    </source>
</evidence>
<evidence type="ECO:0000305" key="8"/>
<sequence length="585" mass="63982">MEVEEEVSRWEGYADWRNRAAVKGRHGGMLAASFVLVVEILENLAYLANASNLVLYLREYMHMSPSKSANDVTNFMGTAFLLALLGGFLSDAFFSTFQIFLISASIEFLGLIILTIQARTPSLMPPSCDSPTCEEVSGSKAAMLFVGLYLVALGVGGIKGSLASHGAEQFDESTPKGRKQRSTFFNYFVFCLACGALVAVTFVVWLEDNKGWEWGFGVSTIAIFVSILIFLSGSRFYRNKIPCGSPLTTILKVLLAASVKCCSSGSSSNAVASMSVSPSNHCVSKGKKEVESQGELEKPRQEEALPPRAQLTNSLKVLNGAADEKPVHRLLECTVQQVEDVKIVLKMLPIFACTIMLNCCLAQLSTFSVQQAASMNTKIGSLKIPPASLPIFPVVFIMILAPIYDHLIIPFARKATKTETGVTHLQRIGVGLVLSILAMAVAALVEIKRKGVAKDSGLLDSKETLPVTFLWIALQYLFLGSADLFTLAGLLEYFFTEAPSSMRSLATSLSWASLAMGYYLSSVIVSIVNSITGSSGNTPWLRGKSINRYKLDYFYWLMCVLSAANFLHYLFWAMRYKYRSTGSRS</sequence>
<accession>Q8H157</accession>
<accession>O81393</accession>
<accession>Q8W4N9</accession>
<accession>Q9CAR8</accession>
<keyword id="KW-1003">Cell membrane</keyword>
<keyword id="KW-0472">Membrane</keyword>
<keyword id="KW-0534">Nitrate assimilation</keyword>
<keyword id="KW-1185">Reference proteome</keyword>
<keyword id="KW-0769">Symport</keyword>
<keyword id="KW-0812">Transmembrane</keyword>
<keyword id="KW-1133">Transmembrane helix</keyword>
<keyword id="KW-0813">Transport</keyword>
<proteinExistence type="evidence at protein level"/>
<protein>
    <recommendedName>
        <fullName>Protein NRT1/ PTR FAMILY 4.6</fullName>
        <shortName>AtNPF4.6</shortName>
    </recommendedName>
    <alternativeName>
        <fullName>Nitrate transporter 1.2</fullName>
    </alternativeName>
    <alternativeName>
        <fullName>Nitrate transporter NTL1</fullName>
    </alternativeName>
    <alternativeName>
        <fullName>Protein ABA-IMPORTING TRANSPORTER 1</fullName>
    </alternativeName>
</protein>
<dbReference type="EMBL" id="AF073361">
    <property type="protein sequence ID" value="AAC28086.1"/>
    <property type="molecule type" value="mRNA"/>
</dbReference>
<dbReference type="EMBL" id="AC010675">
    <property type="protein sequence ID" value="AAG52554.1"/>
    <property type="status" value="ALT_SEQ"/>
    <property type="molecule type" value="Genomic_DNA"/>
</dbReference>
<dbReference type="EMBL" id="CP002684">
    <property type="protein sequence ID" value="AEE34991.1"/>
    <property type="molecule type" value="Genomic_DNA"/>
</dbReference>
<dbReference type="EMBL" id="BT000720">
    <property type="protein sequence ID" value="AAN31862.1"/>
    <property type="molecule type" value="mRNA"/>
</dbReference>
<dbReference type="EMBL" id="AY062453">
    <property type="protein sequence ID" value="AAL32531.1"/>
    <property type="molecule type" value="mRNA"/>
</dbReference>
<dbReference type="EMBL" id="BT002561">
    <property type="protein sequence ID" value="AAO00921.1"/>
    <property type="molecule type" value="mRNA"/>
</dbReference>
<dbReference type="PIR" id="T51361">
    <property type="entry name" value="T51361"/>
</dbReference>
<dbReference type="SMR" id="Q8H157"/>
<dbReference type="BioGRID" id="28542">
    <property type="interactions" value="22"/>
</dbReference>
<dbReference type="FunCoup" id="Q8H157">
    <property type="interactions" value="180"/>
</dbReference>
<dbReference type="IntAct" id="Q8H157">
    <property type="interactions" value="22"/>
</dbReference>
<dbReference type="STRING" id="3702.Q8H157"/>
<dbReference type="TCDB" id="2.A.17.3.16">
    <property type="family name" value="the proton-dependent oligopeptide transporter (pot/ptr) family"/>
</dbReference>
<dbReference type="PaxDb" id="3702-AT1G69850.1"/>
<dbReference type="ProteomicsDB" id="226427"/>
<dbReference type="EnsemblPlants" id="AT1G69850.1">
    <property type="protein sequence ID" value="AT1G69850.1"/>
    <property type="gene ID" value="AT1G69850"/>
</dbReference>
<dbReference type="GeneID" id="843321"/>
<dbReference type="Gramene" id="AT1G69850.1">
    <property type="protein sequence ID" value="AT1G69850.1"/>
    <property type="gene ID" value="AT1G69850"/>
</dbReference>
<dbReference type="KEGG" id="ath:AT1G69850"/>
<dbReference type="Araport" id="AT1G69850"/>
<dbReference type="TAIR" id="AT1G69850">
    <property type="gene designation" value="NPF4.6"/>
</dbReference>
<dbReference type="eggNOG" id="KOG1237">
    <property type="taxonomic scope" value="Eukaryota"/>
</dbReference>
<dbReference type="HOGENOM" id="CLU_009313_4_0_1"/>
<dbReference type="InParanoid" id="Q8H157"/>
<dbReference type="OMA" id="ACIPAGY"/>
<dbReference type="OrthoDB" id="8904098at2759"/>
<dbReference type="PhylomeDB" id="Q8H157"/>
<dbReference type="SABIO-RK" id="Q8H157"/>
<dbReference type="PRO" id="PR:Q8H157"/>
<dbReference type="Proteomes" id="UP000006548">
    <property type="component" value="Chromosome 1"/>
</dbReference>
<dbReference type="ExpressionAtlas" id="Q8H157">
    <property type="expression patterns" value="baseline and differential"/>
</dbReference>
<dbReference type="GO" id="GO:0005886">
    <property type="term" value="C:plasma membrane"/>
    <property type="evidence" value="ECO:0000314"/>
    <property type="project" value="TAIR"/>
</dbReference>
<dbReference type="GO" id="GO:0090440">
    <property type="term" value="F:abscisic acid transmembrane transporter activity"/>
    <property type="evidence" value="ECO:0000314"/>
    <property type="project" value="TAIR"/>
</dbReference>
<dbReference type="GO" id="GO:0015293">
    <property type="term" value="F:symporter activity"/>
    <property type="evidence" value="ECO:0007669"/>
    <property type="project" value="UniProtKB-KW"/>
</dbReference>
<dbReference type="GO" id="GO:0080168">
    <property type="term" value="P:abscisic acid transport"/>
    <property type="evidence" value="ECO:0000314"/>
    <property type="project" value="TAIR"/>
</dbReference>
<dbReference type="GO" id="GO:0042128">
    <property type="term" value="P:nitrate assimilation"/>
    <property type="evidence" value="ECO:0007669"/>
    <property type="project" value="UniProtKB-KW"/>
</dbReference>
<dbReference type="GO" id="GO:0010119">
    <property type="term" value="P:regulation of stomatal movement"/>
    <property type="evidence" value="ECO:0000315"/>
    <property type="project" value="TAIR"/>
</dbReference>
<dbReference type="GO" id="GO:0009624">
    <property type="term" value="P:response to nematode"/>
    <property type="evidence" value="ECO:0007007"/>
    <property type="project" value="TAIR"/>
</dbReference>
<dbReference type="CDD" id="cd17414">
    <property type="entry name" value="MFS_NPF4"/>
    <property type="match status" value="1"/>
</dbReference>
<dbReference type="Gene3D" id="1.20.1250.20">
    <property type="entry name" value="MFS general substrate transporter like domains"/>
    <property type="match status" value="1"/>
</dbReference>
<dbReference type="InterPro" id="IPR036259">
    <property type="entry name" value="MFS_trans_sf"/>
</dbReference>
<dbReference type="InterPro" id="IPR000109">
    <property type="entry name" value="POT_fam"/>
</dbReference>
<dbReference type="PANTHER" id="PTHR11654">
    <property type="entry name" value="OLIGOPEPTIDE TRANSPORTER-RELATED"/>
    <property type="match status" value="1"/>
</dbReference>
<dbReference type="Pfam" id="PF00854">
    <property type="entry name" value="PTR2"/>
    <property type="match status" value="1"/>
</dbReference>
<dbReference type="SUPFAM" id="SSF103473">
    <property type="entry name" value="MFS general substrate transporter"/>
    <property type="match status" value="1"/>
</dbReference>
<organism>
    <name type="scientific">Arabidopsis thaliana</name>
    <name type="common">Mouse-ear cress</name>
    <dbReference type="NCBI Taxonomy" id="3702"/>
    <lineage>
        <taxon>Eukaryota</taxon>
        <taxon>Viridiplantae</taxon>
        <taxon>Streptophyta</taxon>
        <taxon>Embryophyta</taxon>
        <taxon>Tracheophyta</taxon>
        <taxon>Spermatophyta</taxon>
        <taxon>Magnoliopsida</taxon>
        <taxon>eudicotyledons</taxon>
        <taxon>Gunneridae</taxon>
        <taxon>Pentapetalae</taxon>
        <taxon>rosids</taxon>
        <taxon>malvids</taxon>
        <taxon>Brassicales</taxon>
        <taxon>Brassicaceae</taxon>
        <taxon>Camelineae</taxon>
        <taxon>Arabidopsis</taxon>
    </lineage>
</organism>
<reference key="1">
    <citation type="journal article" date="1999" name="Plant Cell">
        <title>Cloning and functional characterization of an Arabidopsis nitrate transporter gene that encodes a constitutive component of low-affinity uptake.</title>
        <authorList>
            <person name="Huang N.C."/>
            <person name="Liu K.H."/>
            <person name="Lo H.J."/>
            <person name="Tsay Y.F."/>
        </authorList>
    </citation>
    <scope>NUCLEOTIDE SEQUENCE [MRNA]</scope>
    <scope>FUNCTION</scope>
    <scope>BIOPHYSICOCHEMICAL PROPERTIES</scope>
    <scope>INDUCTION BY NITRATE</scope>
    <scope>TISSUE SPECIFICITY</scope>
    <source>
        <strain>cv. Columbia</strain>
    </source>
</reference>
<reference key="2">
    <citation type="journal article" date="2000" name="Nature">
        <title>Sequence and analysis of chromosome 1 of the plant Arabidopsis thaliana.</title>
        <authorList>
            <person name="Theologis A."/>
            <person name="Ecker J.R."/>
            <person name="Palm C.J."/>
            <person name="Federspiel N.A."/>
            <person name="Kaul S."/>
            <person name="White O."/>
            <person name="Alonso J."/>
            <person name="Altafi H."/>
            <person name="Araujo R."/>
            <person name="Bowman C.L."/>
            <person name="Brooks S.Y."/>
            <person name="Buehler E."/>
            <person name="Chan A."/>
            <person name="Chao Q."/>
            <person name="Chen H."/>
            <person name="Cheuk R.F."/>
            <person name="Chin C.W."/>
            <person name="Chung M.K."/>
            <person name="Conn L."/>
            <person name="Conway A.B."/>
            <person name="Conway A.R."/>
            <person name="Creasy T.H."/>
            <person name="Dewar K."/>
            <person name="Dunn P."/>
            <person name="Etgu P."/>
            <person name="Feldblyum T.V."/>
            <person name="Feng J.-D."/>
            <person name="Fong B."/>
            <person name="Fujii C.Y."/>
            <person name="Gill J.E."/>
            <person name="Goldsmith A.D."/>
            <person name="Haas B."/>
            <person name="Hansen N.F."/>
            <person name="Hughes B."/>
            <person name="Huizar L."/>
            <person name="Hunter J.L."/>
            <person name="Jenkins J."/>
            <person name="Johnson-Hopson C."/>
            <person name="Khan S."/>
            <person name="Khaykin E."/>
            <person name="Kim C.J."/>
            <person name="Koo H.L."/>
            <person name="Kremenetskaia I."/>
            <person name="Kurtz D.B."/>
            <person name="Kwan A."/>
            <person name="Lam B."/>
            <person name="Langin-Hooper S."/>
            <person name="Lee A."/>
            <person name="Lee J.M."/>
            <person name="Lenz C.A."/>
            <person name="Li J.H."/>
            <person name="Li Y.-P."/>
            <person name="Lin X."/>
            <person name="Liu S.X."/>
            <person name="Liu Z.A."/>
            <person name="Luros J.S."/>
            <person name="Maiti R."/>
            <person name="Marziali A."/>
            <person name="Militscher J."/>
            <person name="Miranda M."/>
            <person name="Nguyen M."/>
            <person name="Nierman W.C."/>
            <person name="Osborne B.I."/>
            <person name="Pai G."/>
            <person name="Peterson J."/>
            <person name="Pham P.K."/>
            <person name="Rizzo M."/>
            <person name="Rooney T."/>
            <person name="Rowley D."/>
            <person name="Sakano H."/>
            <person name="Salzberg S.L."/>
            <person name="Schwartz J.R."/>
            <person name="Shinn P."/>
            <person name="Southwick A.M."/>
            <person name="Sun H."/>
            <person name="Tallon L.J."/>
            <person name="Tambunga G."/>
            <person name="Toriumi M.J."/>
            <person name="Town C.D."/>
            <person name="Utterback T."/>
            <person name="Van Aken S."/>
            <person name="Vaysberg M."/>
            <person name="Vysotskaia V.S."/>
            <person name="Walker M."/>
            <person name="Wu D."/>
            <person name="Yu G."/>
            <person name="Fraser C.M."/>
            <person name="Venter J.C."/>
            <person name="Davis R.W."/>
        </authorList>
    </citation>
    <scope>NUCLEOTIDE SEQUENCE [LARGE SCALE GENOMIC DNA]</scope>
    <source>
        <strain>cv. Columbia</strain>
    </source>
</reference>
<reference key="3">
    <citation type="journal article" date="2017" name="Plant J.">
        <title>Araport11: a complete reannotation of the Arabidopsis thaliana reference genome.</title>
        <authorList>
            <person name="Cheng C.Y."/>
            <person name="Krishnakumar V."/>
            <person name="Chan A.P."/>
            <person name="Thibaud-Nissen F."/>
            <person name="Schobel S."/>
            <person name="Town C.D."/>
        </authorList>
    </citation>
    <scope>GENOME REANNOTATION</scope>
    <source>
        <strain>cv. Columbia</strain>
    </source>
</reference>
<reference key="4">
    <citation type="journal article" date="2003" name="Science">
        <title>Empirical analysis of transcriptional activity in the Arabidopsis genome.</title>
        <authorList>
            <person name="Yamada K."/>
            <person name="Lim J."/>
            <person name="Dale J.M."/>
            <person name="Chen H."/>
            <person name="Shinn P."/>
            <person name="Palm C.J."/>
            <person name="Southwick A.M."/>
            <person name="Wu H.C."/>
            <person name="Kim C.J."/>
            <person name="Nguyen M."/>
            <person name="Pham P.K."/>
            <person name="Cheuk R.F."/>
            <person name="Karlin-Newmann G."/>
            <person name="Liu S.X."/>
            <person name="Lam B."/>
            <person name="Sakano H."/>
            <person name="Wu T."/>
            <person name="Yu G."/>
            <person name="Miranda M."/>
            <person name="Quach H.L."/>
            <person name="Tripp M."/>
            <person name="Chang C.H."/>
            <person name="Lee J.M."/>
            <person name="Toriumi M.J."/>
            <person name="Chan M.M."/>
            <person name="Tang C.C."/>
            <person name="Onodera C.S."/>
            <person name="Deng J.M."/>
            <person name="Akiyama K."/>
            <person name="Ansari Y."/>
            <person name="Arakawa T."/>
            <person name="Banh J."/>
            <person name="Banno F."/>
            <person name="Bowser L."/>
            <person name="Brooks S.Y."/>
            <person name="Carninci P."/>
            <person name="Chao Q."/>
            <person name="Choy N."/>
            <person name="Enju A."/>
            <person name="Goldsmith A.D."/>
            <person name="Gurjal M."/>
            <person name="Hansen N.F."/>
            <person name="Hayashizaki Y."/>
            <person name="Johnson-Hopson C."/>
            <person name="Hsuan V.W."/>
            <person name="Iida K."/>
            <person name="Karnes M."/>
            <person name="Khan S."/>
            <person name="Koesema E."/>
            <person name="Ishida J."/>
            <person name="Jiang P.X."/>
            <person name="Jones T."/>
            <person name="Kawai J."/>
            <person name="Kamiya A."/>
            <person name="Meyers C."/>
            <person name="Nakajima M."/>
            <person name="Narusaka M."/>
            <person name="Seki M."/>
            <person name="Sakurai T."/>
            <person name="Satou M."/>
            <person name="Tamse R."/>
            <person name="Vaysberg M."/>
            <person name="Wallender E.K."/>
            <person name="Wong C."/>
            <person name="Yamamura Y."/>
            <person name="Yuan S."/>
            <person name="Shinozaki K."/>
            <person name="Davis R.W."/>
            <person name="Theologis A."/>
            <person name="Ecker J.R."/>
        </authorList>
    </citation>
    <scope>NUCLEOTIDE SEQUENCE [LARGE SCALE MRNA]</scope>
    <source>
        <strain>cv. Columbia</strain>
    </source>
</reference>
<reference key="5">
    <citation type="journal article" date="2003" name="Plant Cell Physiol.">
        <title>Regulation of NRT1 and NRT2 gene families of Arabidopsis thaliana: responses to nitrate provision.</title>
        <authorList>
            <person name="Okamoto M."/>
            <person name="Vidmar J.J."/>
            <person name="Glass A.D."/>
        </authorList>
    </citation>
    <scope>INDUCTION BY NITRATE</scope>
</reference>
<reference key="6">
    <citation type="journal article" date="2005" name="Mol. Plant Microbe Interact.">
        <title>Nematode-induced changes of transporter gene expression in Arabidopsis roots.</title>
        <authorList>
            <person name="Hammes U.Z."/>
            <person name="Schachtman D.P."/>
            <person name="Berg R.H."/>
            <person name="Nielsen E."/>
            <person name="Koch W."/>
            <person name="McIntyre L.M."/>
            <person name="Taylor C.G."/>
        </authorList>
    </citation>
    <scope>INDUCTION BY NEMATODES</scope>
</reference>
<reference key="7">
    <citation type="journal article" date="2007" name="FEBS Lett.">
        <title>Nitrate transporters and peptide transporters.</title>
        <authorList>
            <person name="Tsay Y.F."/>
            <person name="Chiu C.C."/>
            <person name="Tsai C.B."/>
            <person name="Ho C.H."/>
            <person name="Hsu P.K."/>
        </authorList>
    </citation>
    <scope>TISSUE SPECIFICITY</scope>
    <scope>GENE FAMILY</scope>
</reference>
<reference key="8">
    <citation type="journal article" date="2010" name="Plant Cell">
        <title>The Arabidopsis nitrate transporter NRT1.8 functions in nitrate removal from the xylem sap and mediates cadmium tolerance.</title>
        <authorList>
            <person name="Li J.Y."/>
            <person name="Fu Y.L."/>
            <person name="Pike S.M."/>
            <person name="Bao J."/>
            <person name="Tian W."/>
            <person name="Zhang Y."/>
            <person name="Chen C.Z."/>
            <person name="Zhang Y."/>
            <person name="Li H.M."/>
            <person name="Huang J."/>
            <person name="Li L.G."/>
            <person name="Schroeder J.I."/>
            <person name="Gassmann W."/>
            <person name="Gong J.M."/>
        </authorList>
    </citation>
    <scope>GENE FAMILY</scope>
</reference>
<reference key="9">
    <citation type="journal article" date="2012" name="Proc. Natl. Acad. Sci. U.S.A.">
        <title>Identification of an abscisic acid transporter by functional screening using the receptor complex as a sensor.</title>
        <authorList>
            <person name="Kanno Y."/>
            <person name="Hanada A."/>
            <person name="Chiba Y."/>
            <person name="Ichikawa T."/>
            <person name="Nakazawa M."/>
            <person name="Matsui M."/>
            <person name="Koshiba T."/>
            <person name="Kamiya Y."/>
            <person name="Seo M."/>
        </authorList>
    </citation>
    <scope>FUNCTION</scope>
    <scope>BIOPHYSICOCHEMICAL PROPERTIES</scope>
    <scope>DISRUPTION PHENOTYPE</scope>
    <scope>SUBCELLULAR LOCATION</scope>
    <scope>TISSUE SPECIFICITY</scope>
</reference>
<reference key="10">
    <citation type="journal article" date="2013" name="Plant Signal. Behav.">
        <title>Nitrate does not compete with abscisic acid as a substrate of AtNPF4.6/NRT1.2/AIT1 in Arabidopsis.</title>
        <authorList>
            <person name="Kanno Y."/>
            <person name="Kamiya Y."/>
            <person name="Seo M."/>
        </authorList>
    </citation>
    <scope>FUNCTION</scope>
</reference>
<reference key="11">
    <citation type="journal article" date="2014" name="Trends Plant Sci.">
        <title>A unified nomenclature of NITRATE TRANSPORTER 1/PEPTIDE TRANSPORTER family members in plants.</title>
        <authorList>
            <person name="Leran S."/>
            <person name="Varala K."/>
            <person name="Boyer J.C."/>
            <person name="Chiurazzi M."/>
            <person name="Crawford N."/>
            <person name="Daniel-Vedele F."/>
            <person name="David L."/>
            <person name="Dickstein R."/>
            <person name="Fernandez E."/>
            <person name="Forde B."/>
            <person name="Gassmann W."/>
            <person name="Geiger D."/>
            <person name="Gojon A."/>
            <person name="Gong J.M."/>
            <person name="Halkier B.A."/>
            <person name="Harris J.M."/>
            <person name="Hedrich R."/>
            <person name="Limami A.M."/>
            <person name="Rentsch D."/>
            <person name="Seo M."/>
            <person name="Tsay Y.F."/>
            <person name="Zhang M."/>
            <person name="Coruzzi G."/>
            <person name="Lacombe B."/>
        </authorList>
    </citation>
    <scope>GENE FAMILY</scope>
    <scope>NOMENCLATURE</scope>
</reference>
<name>PTR19_ARATH</name>
<feature type="chain" id="PRO_0000399953" description="Protein NRT1/ PTR FAMILY 4.6">
    <location>
        <begin position="1"/>
        <end position="585"/>
    </location>
</feature>
<feature type="transmembrane region" description="Helical" evidence="1">
    <location>
        <begin position="28"/>
        <end position="48"/>
    </location>
</feature>
<feature type="transmembrane region" description="Helical" evidence="1">
    <location>
        <begin position="75"/>
        <end position="95"/>
    </location>
</feature>
<feature type="transmembrane region" description="Helical" evidence="1">
    <location>
        <begin position="96"/>
        <end position="116"/>
    </location>
</feature>
<feature type="transmembrane region" description="Helical" evidence="1">
    <location>
        <begin position="142"/>
        <end position="162"/>
    </location>
</feature>
<feature type="transmembrane region" description="Helical" evidence="1">
    <location>
        <begin position="184"/>
        <end position="204"/>
    </location>
</feature>
<feature type="transmembrane region" description="Helical" evidence="1">
    <location>
        <begin position="211"/>
        <end position="231"/>
    </location>
</feature>
<feature type="transmembrane region" description="Helical" evidence="1">
    <location>
        <begin position="343"/>
        <end position="363"/>
    </location>
</feature>
<feature type="transmembrane region" description="Helical" evidence="1">
    <location>
        <begin position="391"/>
        <end position="411"/>
    </location>
</feature>
<feature type="transmembrane region" description="Helical" evidence="1">
    <location>
        <begin position="428"/>
        <end position="448"/>
    </location>
</feature>
<feature type="transmembrane region" description="Helical" evidence="1">
    <location>
        <begin position="465"/>
        <end position="485"/>
    </location>
</feature>
<feature type="transmembrane region" description="Helical" evidence="1">
    <location>
        <begin position="508"/>
        <end position="528"/>
    </location>
</feature>
<feature type="transmembrane region" description="Helical" evidence="1">
    <location>
        <begin position="554"/>
        <end position="574"/>
    </location>
</feature>
<feature type="sequence conflict" description="In Ref. 4; AAL32531/AAO00921." evidence="8" ref="4">
    <original>M</original>
    <variation>V</variation>
    <location>
        <position position="29"/>
    </location>
</feature>
<feature type="sequence conflict" description="In Ref. 1; AAC28086." evidence="8" ref="1">
    <original>F</original>
    <variation>L</variation>
    <location>
        <position position="392"/>
    </location>
</feature>
<feature type="sequence conflict" description="In Ref. 1; AAC28086." evidence="8" ref="1">
    <original>A</original>
    <variation>G</variation>
    <location>
        <position position="473"/>
    </location>
</feature>